<comment type="similarity">
    <text evidence="1">Belongs to the UPF0473 family.</text>
</comment>
<organism>
    <name type="scientific">Limosilactobacillus reuteri (strain DSM 20016)</name>
    <name type="common">Lactobacillus reuteri</name>
    <dbReference type="NCBI Taxonomy" id="557436"/>
    <lineage>
        <taxon>Bacteria</taxon>
        <taxon>Bacillati</taxon>
        <taxon>Bacillota</taxon>
        <taxon>Bacilli</taxon>
        <taxon>Lactobacillales</taxon>
        <taxon>Lactobacillaceae</taxon>
        <taxon>Limosilactobacillus</taxon>
    </lineage>
</organism>
<proteinExistence type="inferred from homology"/>
<keyword id="KW-1185">Reference proteome</keyword>
<name>Y536_LIMRD</name>
<sequence>MSKQENNEDMITLIDENGNEQLFKELFTFDSDDYGKSYIFIYPAEQENDDSVDIQAYIIADNEDNDGQDLVPIEDDKEWDMVEEVLNTFLDNDGNFKA</sequence>
<dbReference type="EMBL" id="CP000705">
    <property type="protein sequence ID" value="ABQ82804.1"/>
    <property type="molecule type" value="Genomic_DNA"/>
</dbReference>
<dbReference type="RefSeq" id="WP_003666689.1">
    <property type="nucleotide sequence ID" value="NZ_AZDD01000007.1"/>
</dbReference>
<dbReference type="SMR" id="A5VIY0"/>
<dbReference type="STRING" id="557436.Lreu_0536"/>
<dbReference type="KEGG" id="lre:Lreu_0536"/>
<dbReference type="PATRIC" id="fig|557436.17.peg.1816"/>
<dbReference type="eggNOG" id="COG3906">
    <property type="taxonomic scope" value="Bacteria"/>
</dbReference>
<dbReference type="HOGENOM" id="CLU_146610_2_1_9"/>
<dbReference type="OMA" id="HSDDYDK"/>
<dbReference type="Proteomes" id="UP000001991">
    <property type="component" value="Chromosome"/>
</dbReference>
<dbReference type="HAMAP" id="MF_01448">
    <property type="entry name" value="UPF0473"/>
    <property type="match status" value="1"/>
</dbReference>
<dbReference type="InterPro" id="IPR009711">
    <property type="entry name" value="UPF0473"/>
</dbReference>
<dbReference type="NCBIfam" id="NF010217">
    <property type="entry name" value="PRK13678.1-4"/>
    <property type="match status" value="1"/>
</dbReference>
<dbReference type="PANTHER" id="PTHR40066">
    <property type="entry name" value="UPF0473 PROTEIN CBO2561/CLC_2432"/>
    <property type="match status" value="1"/>
</dbReference>
<dbReference type="PANTHER" id="PTHR40066:SF1">
    <property type="entry name" value="UPF0473 PROTEIN CBO2561_CLC_2432"/>
    <property type="match status" value="1"/>
</dbReference>
<dbReference type="Pfam" id="PF06949">
    <property type="entry name" value="DUF1292"/>
    <property type="match status" value="1"/>
</dbReference>
<gene>
    <name type="ordered locus">Lreu_0536</name>
</gene>
<protein>
    <recommendedName>
        <fullName evidence="1">UPF0473 protein Lreu_0536</fullName>
    </recommendedName>
</protein>
<evidence type="ECO:0000255" key="1">
    <source>
        <dbReference type="HAMAP-Rule" id="MF_01448"/>
    </source>
</evidence>
<reference key="1">
    <citation type="journal article" date="2011" name="PLoS Genet.">
        <title>The evolution of host specialization in the vertebrate gut symbiont Lactobacillus reuteri.</title>
        <authorList>
            <person name="Frese S.A."/>
            <person name="Benson A.K."/>
            <person name="Tannock G.W."/>
            <person name="Loach D.M."/>
            <person name="Kim J."/>
            <person name="Zhang M."/>
            <person name="Oh P.L."/>
            <person name="Heng N.C."/>
            <person name="Patil P.B."/>
            <person name="Juge N."/>
            <person name="Mackenzie D.A."/>
            <person name="Pearson B.M."/>
            <person name="Lapidus A."/>
            <person name="Dalin E."/>
            <person name="Tice H."/>
            <person name="Goltsman E."/>
            <person name="Land M."/>
            <person name="Hauser L."/>
            <person name="Ivanova N."/>
            <person name="Kyrpides N.C."/>
            <person name="Walter J."/>
        </authorList>
    </citation>
    <scope>NUCLEOTIDE SEQUENCE [LARGE SCALE GENOMIC DNA]</scope>
    <source>
        <strain>DSM 20016</strain>
    </source>
</reference>
<feature type="chain" id="PRO_1000200980" description="UPF0473 protein Lreu_0536">
    <location>
        <begin position="1"/>
        <end position="98"/>
    </location>
</feature>
<accession>A5VIY0</accession>